<protein>
    <recommendedName>
        <fullName evidence="1">tRNA/tmRNA (uracil-C(5))-methyltransferase</fullName>
        <ecNumber evidence="1">2.1.1.-</ecNumber>
        <ecNumber evidence="1">2.1.1.35</ecNumber>
    </recommendedName>
    <alternativeName>
        <fullName evidence="1">tRNA (uracil(54)-C(5))-methyltransferase</fullName>
    </alternativeName>
    <alternativeName>
        <fullName evidence="1">tRNA(m5U54)-methyltransferase</fullName>
        <shortName evidence="1">RUMT</shortName>
    </alternativeName>
    <alternativeName>
        <fullName evidence="1">tmRNA (uracil(341)-C(5))-methyltransferase</fullName>
    </alternativeName>
</protein>
<gene>
    <name evidence="1" type="primary">trmA</name>
    <name type="ordered locus">PM1803</name>
</gene>
<name>TRMA_PASMU</name>
<proteinExistence type="inferred from homology"/>
<feature type="chain" id="PRO_0000161869" description="tRNA/tmRNA (uracil-C(5))-methyltransferase">
    <location>
        <begin position="1"/>
        <end position="365"/>
    </location>
</feature>
<feature type="active site" description="Nucleophile" evidence="1">
    <location>
        <position position="323"/>
    </location>
</feature>
<feature type="active site" description="Proton acceptor" evidence="1">
    <location>
        <position position="357"/>
    </location>
</feature>
<feature type="binding site" evidence="1">
    <location>
        <position position="189"/>
    </location>
    <ligand>
        <name>S-adenosyl-L-methionine</name>
        <dbReference type="ChEBI" id="CHEBI:59789"/>
    </ligand>
</feature>
<feature type="binding site" evidence="1">
    <location>
        <position position="217"/>
    </location>
    <ligand>
        <name>S-adenosyl-L-methionine</name>
        <dbReference type="ChEBI" id="CHEBI:59789"/>
    </ligand>
</feature>
<feature type="binding site" evidence="1">
    <location>
        <position position="222"/>
    </location>
    <ligand>
        <name>S-adenosyl-L-methionine</name>
        <dbReference type="ChEBI" id="CHEBI:59789"/>
    </ligand>
</feature>
<feature type="binding site" evidence="1">
    <location>
        <position position="238"/>
    </location>
    <ligand>
        <name>S-adenosyl-L-methionine</name>
        <dbReference type="ChEBI" id="CHEBI:59789"/>
    </ligand>
</feature>
<feature type="binding site" evidence="1">
    <location>
        <position position="298"/>
    </location>
    <ligand>
        <name>S-adenosyl-L-methionine</name>
        <dbReference type="ChEBI" id="CHEBI:59789"/>
    </ligand>
</feature>
<comment type="function">
    <text evidence="1">Dual-specificity methyltransferase that catalyzes the formation of 5-methyluridine at position 54 (m5U54) in all tRNAs, and that of position 341 (m5U341) in tmRNA (transfer-mRNA).</text>
</comment>
<comment type="catalytic activity">
    <reaction evidence="1">
        <text>uridine(54) in tRNA + S-adenosyl-L-methionine = 5-methyluridine(54) in tRNA + S-adenosyl-L-homocysteine + H(+)</text>
        <dbReference type="Rhea" id="RHEA:42712"/>
        <dbReference type="Rhea" id="RHEA-COMP:10167"/>
        <dbReference type="Rhea" id="RHEA-COMP:10193"/>
        <dbReference type="ChEBI" id="CHEBI:15378"/>
        <dbReference type="ChEBI" id="CHEBI:57856"/>
        <dbReference type="ChEBI" id="CHEBI:59789"/>
        <dbReference type="ChEBI" id="CHEBI:65315"/>
        <dbReference type="ChEBI" id="CHEBI:74447"/>
        <dbReference type="EC" id="2.1.1.35"/>
    </reaction>
</comment>
<comment type="catalytic activity">
    <reaction evidence="1">
        <text>uridine(341) in tmRNA + S-adenosyl-L-methionine = 5-methyluridine(341) in tmRNA + S-adenosyl-L-homocysteine + H(+)</text>
        <dbReference type="Rhea" id="RHEA:43612"/>
        <dbReference type="Rhea" id="RHEA-COMP:10630"/>
        <dbReference type="Rhea" id="RHEA-COMP:10631"/>
        <dbReference type="ChEBI" id="CHEBI:15378"/>
        <dbReference type="ChEBI" id="CHEBI:57856"/>
        <dbReference type="ChEBI" id="CHEBI:59789"/>
        <dbReference type="ChEBI" id="CHEBI:65315"/>
        <dbReference type="ChEBI" id="CHEBI:74447"/>
    </reaction>
</comment>
<comment type="similarity">
    <text evidence="1">Belongs to the class I-like SAM-binding methyltransferase superfamily. RNA M5U methyltransferase family. TrmA subfamily.</text>
</comment>
<sequence length="365" mass="42268">MQALLPIEQYDSLLAEKQKKLTALLAPFHAPALAVFPSPVQHYRMRAEFRIWHDKGDFYHIMFDQRTRQRYRVDCFPMASQLINQMMDTLLPLLKTNRVLHHKLFQIDYLSTLSNKIIVSLLYHKTLDEEWEQAAKQLKASLLQQGFDLQLIGRASKQKICLEQEFVDEVLTVHGKSYVYRQVENSFTQPNAIVNQKMLEWAVDCTQNSEGDLLELYCGNGNFSIALAQNFRKVLATEIAKPSVAAAQFNIAENSIKNLQIIRMSAEEFTQAMNGVREFHRLKGIDLNAYECNTIFVDPPRAGLDEETVKLVQNYDRILYISCNPHTLCDNLQHLCQTHRIEKAALFDQFPYTEHMEAGVWLIRK</sequence>
<reference key="1">
    <citation type="journal article" date="2001" name="Proc. Natl. Acad. Sci. U.S.A.">
        <title>Complete genomic sequence of Pasteurella multocida Pm70.</title>
        <authorList>
            <person name="May B.J."/>
            <person name="Zhang Q."/>
            <person name="Li L.L."/>
            <person name="Paustian M.L."/>
            <person name="Whittam T.S."/>
            <person name="Kapur V."/>
        </authorList>
    </citation>
    <scope>NUCLEOTIDE SEQUENCE [LARGE SCALE GENOMIC DNA]</scope>
    <source>
        <strain>Pm70</strain>
    </source>
</reference>
<accession>Q9CK32</accession>
<organism>
    <name type="scientific">Pasteurella multocida (strain Pm70)</name>
    <dbReference type="NCBI Taxonomy" id="272843"/>
    <lineage>
        <taxon>Bacteria</taxon>
        <taxon>Pseudomonadati</taxon>
        <taxon>Pseudomonadota</taxon>
        <taxon>Gammaproteobacteria</taxon>
        <taxon>Pasteurellales</taxon>
        <taxon>Pasteurellaceae</taxon>
        <taxon>Pasteurella</taxon>
    </lineage>
</organism>
<dbReference type="EC" id="2.1.1.-" evidence="1"/>
<dbReference type="EC" id="2.1.1.35" evidence="1"/>
<dbReference type="EMBL" id="AE004439">
    <property type="protein sequence ID" value="AAK03887.1"/>
    <property type="molecule type" value="Genomic_DNA"/>
</dbReference>
<dbReference type="RefSeq" id="WP_010907346.1">
    <property type="nucleotide sequence ID" value="NC_002663.1"/>
</dbReference>
<dbReference type="SMR" id="Q9CK32"/>
<dbReference type="STRING" id="272843.PM1803"/>
<dbReference type="EnsemblBacteria" id="AAK03887">
    <property type="protein sequence ID" value="AAK03887"/>
    <property type="gene ID" value="PM1803"/>
</dbReference>
<dbReference type="KEGG" id="pmu:PM1803"/>
<dbReference type="PATRIC" id="fig|272843.6.peg.1827"/>
<dbReference type="HOGENOM" id="CLU_043022_0_0_6"/>
<dbReference type="OrthoDB" id="9804590at2"/>
<dbReference type="Proteomes" id="UP000000809">
    <property type="component" value="Chromosome"/>
</dbReference>
<dbReference type="GO" id="GO:0005829">
    <property type="term" value="C:cytosol"/>
    <property type="evidence" value="ECO:0007669"/>
    <property type="project" value="TreeGrafter"/>
</dbReference>
<dbReference type="GO" id="GO:0019843">
    <property type="term" value="F:rRNA binding"/>
    <property type="evidence" value="ECO:0007669"/>
    <property type="project" value="TreeGrafter"/>
</dbReference>
<dbReference type="GO" id="GO:0030697">
    <property type="term" value="F:tRNA (uracil(54)-C5)-methyltransferase activity, S-adenosyl methionine-dependent"/>
    <property type="evidence" value="ECO:0007669"/>
    <property type="project" value="UniProtKB-UniRule"/>
</dbReference>
<dbReference type="GO" id="GO:0000049">
    <property type="term" value="F:tRNA binding"/>
    <property type="evidence" value="ECO:0007669"/>
    <property type="project" value="TreeGrafter"/>
</dbReference>
<dbReference type="GO" id="GO:0030488">
    <property type="term" value="P:tRNA methylation"/>
    <property type="evidence" value="ECO:0007669"/>
    <property type="project" value="UniProtKB-UniRule"/>
</dbReference>
<dbReference type="CDD" id="cd02440">
    <property type="entry name" value="AdoMet_MTases"/>
    <property type="match status" value="1"/>
</dbReference>
<dbReference type="FunFam" id="2.40.50.1070:FF:000001">
    <property type="entry name" value="tRNA/tmRNA (uracil-C(5))-methyltransferase"/>
    <property type="match status" value="1"/>
</dbReference>
<dbReference type="FunFam" id="3.40.50.150:FF:000012">
    <property type="entry name" value="tRNA/tmRNA (uracil-C(5))-methyltransferase"/>
    <property type="match status" value="1"/>
</dbReference>
<dbReference type="Gene3D" id="2.40.50.1070">
    <property type="match status" value="1"/>
</dbReference>
<dbReference type="Gene3D" id="3.40.50.150">
    <property type="entry name" value="Vaccinia Virus protein VP39"/>
    <property type="match status" value="1"/>
</dbReference>
<dbReference type="HAMAP" id="MF_01011">
    <property type="entry name" value="RNA_methyltr_TrmA"/>
    <property type="match status" value="1"/>
</dbReference>
<dbReference type="InterPro" id="IPR030390">
    <property type="entry name" value="MeTrfase_TrmA_AS"/>
</dbReference>
<dbReference type="InterPro" id="IPR030391">
    <property type="entry name" value="MeTrfase_TrmA_CS"/>
</dbReference>
<dbReference type="InterPro" id="IPR029063">
    <property type="entry name" value="SAM-dependent_MTases_sf"/>
</dbReference>
<dbReference type="InterPro" id="IPR011869">
    <property type="entry name" value="TrmA_MeTrfase"/>
</dbReference>
<dbReference type="InterPro" id="IPR010280">
    <property type="entry name" value="U5_MeTrfase_fam"/>
</dbReference>
<dbReference type="NCBIfam" id="TIGR02143">
    <property type="entry name" value="trmA_only"/>
    <property type="match status" value="1"/>
</dbReference>
<dbReference type="PANTHER" id="PTHR47790">
    <property type="entry name" value="TRNA/TMRNA (URACIL-C(5))-METHYLTRANSFERASE"/>
    <property type="match status" value="1"/>
</dbReference>
<dbReference type="PANTHER" id="PTHR47790:SF2">
    <property type="entry name" value="TRNA_TMRNA (URACIL-C(5))-METHYLTRANSFERASE"/>
    <property type="match status" value="1"/>
</dbReference>
<dbReference type="Pfam" id="PF05958">
    <property type="entry name" value="tRNA_U5-meth_tr"/>
    <property type="match status" value="1"/>
</dbReference>
<dbReference type="SUPFAM" id="SSF53335">
    <property type="entry name" value="S-adenosyl-L-methionine-dependent methyltransferases"/>
    <property type="match status" value="1"/>
</dbReference>
<dbReference type="PROSITE" id="PS51687">
    <property type="entry name" value="SAM_MT_RNA_M5U"/>
    <property type="match status" value="1"/>
</dbReference>
<dbReference type="PROSITE" id="PS01230">
    <property type="entry name" value="TRMA_1"/>
    <property type="match status" value="1"/>
</dbReference>
<dbReference type="PROSITE" id="PS01231">
    <property type="entry name" value="TRMA_2"/>
    <property type="match status" value="1"/>
</dbReference>
<keyword id="KW-0489">Methyltransferase</keyword>
<keyword id="KW-1185">Reference proteome</keyword>
<keyword id="KW-0949">S-adenosyl-L-methionine</keyword>
<keyword id="KW-0808">Transferase</keyword>
<keyword id="KW-0819">tRNA processing</keyword>
<evidence type="ECO:0000255" key="1">
    <source>
        <dbReference type="HAMAP-Rule" id="MF_01011"/>
    </source>
</evidence>